<name>FABI_BACSU</name>
<proteinExistence type="evidence at protein level"/>
<dbReference type="EC" id="1.3.1.9"/>
<dbReference type="EMBL" id="AL009126">
    <property type="protein sequence ID" value="CAB13029.2"/>
    <property type="molecule type" value="Genomic_DNA"/>
</dbReference>
<dbReference type="PIR" id="G69845">
    <property type="entry name" value="G69845"/>
</dbReference>
<dbReference type="RefSeq" id="NP_389054.2">
    <property type="nucleotide sequence ID" value="NC_000964.3"/>
</dbReference>
<dbReference type="RefSeq" id="WP_003232896.1">
    <property type="nucleotide sequence ID" value="NZ_OZ025638.1"/>
</dbReference>
<dbReference type="PDB" id="3OIF">
    <property type="method" value="X-ray"/>
    <property type="resolution" value="2.60 A"/>
    <property type="chains" value="A/B/C/D=1-258"/>
</dbReference>
<dbReference type="PDB" id="3OIG">
    <property type="method" value="X-ray"/>
    <property type="resolution" value="1.25 A"/>
    <property type="chains" value="A=1-258"/>
</dbReference>
<dbReference type="PDBsum" id="3OIF"/>
<dbReference type="PDBsum" id="3OIG"/>
<dbReference type="SMR" id="P54616"/>
<dbReference type="FunCoup" id="P54616">
    <property type="interactions" value="497"/>
</dbReference>
<dbReference type="IntAct" id="P54616">
    <property type="interactions" value="1"/>
</dbReference>
<dbReference type="MINT" id="P54616"/>
<dbReference type="STRING" id="224308.BSU11720"/>
<dbReference type="BindingDB" id="P54616"/>
<dbReference type="ChEMBL" id="CHEMBL1075044"/>
<dbReference type="DrugCentral" id="P54616"/>
<dbReference type="SwissLipids" id="SLP:000001776"/>
<dbReference type="jPOST" id="P54616"/>
<dbReference type="PaxDb" id="224308-BSU11720"/>
<dbReference type="EnsemblBacteria" id="CAB13029">
    <property type="protein sequence ID" value="CAB13029"/>
    <property type="gene ID" value="BSU_11720"/>
</dbReference>
<dbReference type="GeneID" id="939379"/>
<dbReference type="KEGG" id="bsu:BSU11720"/>
<dbReference type="PATRIC" id="fig|224308.179.peg.1261"/>
<dbReference type="eggNOG" id="COG0623">
    <property type="taxonomic scope" value="Bacteria"/>
</dbReference>
<dbReference type="InParanoid" id="P54616"/>
<dbReference type="OrthoDB" id="9803628at2"/>
<dbReference type="PhylomeDB" id="P54616"/>
<dbReference type="BioCyc" id="BSUB:BSU11720-MONOMER"/>
<dbReference type="BioCyc" id="MetaCyc:BSU11720-MONOMER"/>
<dbReference type="BRENDA" id="1.3.1.9">
    <property type="organism ID" value="658"/>
</dbReference>
<dbReference type="SABIO-RK" id="P54616"/>
<dbReference type="UniPathway" id="UPA00094"/>
<dbReference type="EvolutionaryTrace" id="P54616"/>
<dbReference type="Proteomes" id="UP000001570">
    <property type="component" value="Chromosome"/>
</dbReference>
<dbReference type="GO" id="GO:0004318">
    <property type="term" value="F:enoyl-[acyl-carrier-protein] reductase (NADH) activity"/>
    <property type="evidence" value="ECO:0000314"/>
    <property type="project" value="UniProtKB"/>
</dbReference>
<dbReference type="GO" id="GO:0070417">
    <property type="term" value="P:cellular response to cold"/>
    <property type="evidence" value="ECO:0000270"/>
    <property type="project" value="UniProtKB"/>
</dbReference>
<dbReference type="GO" id="GO:0030497">
    <property type="term" value="P:fatty acid elongation"/>
    <property type="evidence" value="ECO:0000314"/>
    <property type="project" value="UniProtKB"/>
</dbReference>
<dbReference type="CDD" id="cd05372">
    <property type="entry name" value="ENR_SDR"/>
    <property type="match status" value="1"/>
</dbReference>
<dbReference type="FunFam" id="1.10.8.400:FF:000001">
    <property type="entry name" value="Enoyl-[acyl-carrier-protein] reductase [NADH]"/>
    <property type="match status" value="1"/>
</dbReference>
<dbReference type="FunFam" id="3.40.50.720:FF:000127">
    <property type="entry name" value="Enoyl-[acyl-carrier-protein] reductase [NADH]"/>
    <property type="match status" value="1"/>
</dbReference>
<dbReference type="Gene3D" id="3.40.50.720">
    <property type="entry name" value="NAD(P)-binding Rossmann-like Domain"/>
    <property type="match status" value="1"/>
</dbReference>
<dbReference type="InterPro" id="IPR014358">
    <property type="entry name" value="Enoyl-ACP_Rdtase_NADH"/>
</dbReference>
<dbReference type="InterPro" id="IPR036291">
    <property type="entry name" value="NAD(P)-bd_dom_sf"/>
</dbReference>
<dbReference type="InterPro" id="IPR002347">
    <property type="entry name" value="SDR_fam"/>
</dbReference>
<dbReference type="NCBIfam" id="NF006369">
    <property type="entry name" value="PRK08594.1"/>
    <property type="match status" value="1"/>
</dbReference>
<dbReference type="PANTHER" id="PTHR43159">
    <property type="entry name" value="ENOYL-[ACYL-CARRIER-PROTEIN] REDUCTASE"/>
    <property type="match status" value="1"/>
</dbReference>
<dbReference type="PANTHER" id="PTHR43159:SF2">
    <property type="entry name" value="ENOYL-[ACYL-CARRIER-PROTEIN] REDUCTASE [NADH], CHLOROPLASTIC"/>
    <property type="match status" value="1"/>
</dbReference>
<dbReference type="Pfam" id="PF13561">
    <property type="entry name" value="adh_short_C2"/>
    <property type="match status" value="1"/>
</dbReference>
<dbReference type="PIRSF" id="PIRSF000094">
    <property type="entry name" value="Enoyl-ACP_rdct"/>
    <property type="match status" value="1"/>
</dbReference>
<dbReference type="PRINTS" id="PR00081">
    <property type="entry name" value="GDHRDH"/>
</dbReference>
<dbReference type="SUPFAM" id="SSF51735">
    <property type="entry name" value="NAD(P)-binding Rossmann-fold domains"/>
    <property type="match status" value="1"/>
</dbReference>
<evidence type="ECO:0000250" key="1"/>
<evidence type="ECO:0000269" key="2">
    <source>
    </source>
</evidence>
<evidence type="ECO:0000269" key="3">
    <source>
    </source>
</evidence>
<evidence type="ECO:0000269" key="4">
    <source>
    </source>
</evidence>
<evidence type="ECO:0000305" key="5"/>
<evidence type="ECO:0007829" key="6">
    <source>
        <dbReference type="PDB" id="3OIF"/>
    </source>
</evidence>
<evidence type="ECO:0007829" key="7">
    <source>
        <dbReference type="PDB" id="3OIG"/>
    </source>
</evidence>
<gene>
    <name type="primary">fabI</name>
    <name type="synonym">yjbW</name>
    <name type="ordered locus">BSU11720</name>
</gene>
<reference key="1">
    <citation type="journal article" date="1997" name="Nature">
        <title>The complete genome sequence of the Gram-positive bacterium Bacillus subtilis.</title>
        <authorList>
            <person name="Kunst F."/>
            <person name="Ogasawara N."/>
            <person name="Moszer I."/>
            <person name="Albertini A.M."/>
            <person name="Alloni G."/>
            <person name="Azevedo V."/>
            <person name="Bertero M.G."/>
            <person name="Bessieres P."/>
            <person name="Bolotin A."/>
            <person name="Borchert S."/>
            <person name="Borriss R."/>
            <person name="Boursier L."/>
            <person name="Brans A."/>
            <person name="Braun M."/>
            <person name="Brignell S.C."/>
            <person name="Bron S."/>
            <person name="Brouillet S."/>
            <person name="Bruschi C.V."/>
            <person name="Caldwell B."/>
            <person name="Capuano V."/>
            <person name="Carter N.M."/>
            <person name="Choi S.-K."/>
            <person name="Codani J.-J."/>
            <person name="Connerton I.F."/>
            <person name="Cummings N.J."/>
            <person name="Daniel R.A."/>
            <person name="Denizot F."/>
            <person name="Devine K.M."/>
            <person name="Duesterhoeft A."/>
            <person name="Ehrlich S.D."/>
            <person name="Emmerson P.T."/>
            <person name="Entian K.-D."/>
            <person name="Errington J."/>
            <person name="Fabret C."/>
            <person name="Ferrari E."/>
            <person name="Foulger D."/>
            <person name="Fritz C."/>
            <person name="Fujita M."/>
            <person name="Fujita Y."/>
            <person name="Fuma S."/>
            <person name="Galizzi A."/>
            <person name="Galleron N."/>
            <person name="Ghim S.-Y."/>
            <person name="Glaser P."/>
            <person name="Goffeau A."/>
            <person name="Golightly E.J."/>
            <person name="Grandi G."/>
            <person name="Guiseppi G."/>
            <person name="Guy B.J."/>
            <person name="Haga K."/>
            <person name="Haiech J."/>
            <person name="Harwood C.R."/>
            <person name="Henaut A."/>
            <person name="Hilbert H."/>
            <person name="Holsappel S."/>
            <person name="Hosono S."/>
            <person name="Hullo M.-F."/>
            <person name="Itaya M."/>
            <person name="Jones L.-M."/>
            <person name="Joris B."/>
            <person name="Karamata D."/>
            <person name="Kasahara Y."/>
            <person name="Klaerr-Blanchard M."/>
            <person name="Klein C."/>
            <person name="Kobayashi Y."/>
            <person name="Koetter P."/>
            <person name="Koningstein G."/>
            <person name="Krogh S."/>
            <person name="Kumano M."/>
            <person name="Kurita K."/>
            <person name="Lapidus A."/>
            <person name="Lardinois S."/>
            <person name="Lauber J."/>
            <person name="Lazarevic V."/>
            <person name="Lee S.-M."/>
            <person name="Levine A."/>
            <person name="Liu H."/>
            <person name="Masuda S."/>
            <person name="Mauel C."/>
            <person name="Medigue C."/>
            <person name="Medina N."/>
            <person name="Mellado R.P."/>
            <person name="Mizuno M."/>
            <person name="Moestl D."/>
            <person name="Nakai S."/>
            <person name="Noback M."/>
            <person name="Noone D."/>
            <person name="O'Reilly M."/>
            <person name="Ogawa K."/>
            <person name="Ogiwara A."/>
            <person name="Oudega B."/>
            <person name="Park S.-H."/>
            <person name="Parro V."/>
            <person name="Pohl T.M."/>
            <person name="Portetelle D."/>
            <person name="Porwollik S."/>
            <person name="Prescott A.M."/>
            <person name="Presecan E."/>
            <person name="Pujic P."/>
            <person name="Purnelle B."/>
            <person name="Rapoport G."/>
            <person name="Rey M."/>
            <person name="Reynolds S."/>
            <person name="Rieger M."/>
            <person name="Rivolta C."/>
            <person name="Rocha E."/>
            <person name="Roche B."/>
            <person name="Rose M."/>
            <person name="Sadaie Y."/>
            <person name="Sato T."/>
            <person name="Scanlan E."/>
            <person name="Schleich S."/>
            <person name="Schroeter R."/>
            <person name="Scoffone F."/>
            <person name="Sekiguchi J."/>
            <person name="Sekowska A."/>
            <person name="Seror S.J."/>
            <person name="Serror P."/>
            <person name="Shin B.-S."/>
            <person name="Soldo B."/>
            <person name="Sorokin A."/>
            <person name="Tacconi E."/>
            <person name="Takagi T."/>
            <person name="Takahashi H."/>
            <person name="Takemaru K."/>
            <person name="Takeuchi M."/>
            <person name="Tamakoshi A."/>
            <person name="Tanaka T."/>
            <person name="Terpstra P."/>
            <person name="Tognoni A."/>
            <person name="Tosato V."/>
            <person name="Uchiyama S."/>
            <person name="Vandenbol M."/>
            <person name="Vannier F."/>
            <person name="Vassarotti A."/>
            <person name="Viari A."/>
            <person name="Wambutt R."/>
            <person name="Wedler E."/>
            <person name="Wedler H."/>
            <person name="Weitzenegger T."/>
            <person name="Winters P."/>
            <person name="Wipat A."/>
            <person name="Yamamoto H."/>
            <person name="Yamane K."/>
            <person name="Yasumoto K."/>
            <person name="Yata K."/>
            <person name="Yoshida K."/>
            <person name="Yoshikawa H.-F."/>
            <person name="Zumstein E."/>
            <person name="Yoshikawa H."/>
            <person name="Danchin A."/>
        </authorList>
    </citation>
    <scope>NUCLEOTIDE SEQUENCE [LARGE SCALE GENOMIC DNA]</scope>
    <source>
        <strain>168</strain>
    </source>
</reference>
<reference key="2">
    <citation type="journal article" date="1996" name="J. Bacteriol.">
        <title>Cold shock stress-induced proteins in Bacillus subtilis.</title>
        <authorList>
            <person name="Graumann P."/>
            <person name="Schroeder K."/>
            <person name="Schmid R."/>
            <person name="Marahiel M.A."/>
        </authorList>
    </citation>
    <scope>PROTEIN SEQUENCE OF 1-21</scope>
    <scope>INDUCTION</scope>
    <source>
        <strain>168 / JH642</strain>
    </source>
</reference>
<reference key="3">
    <citation type="journal article" date="1997" name="Electrophoresis">
        <title>First steps from a two-dimensional protein index towards a response-regulation map for Bacillus subtilis.</title>
        <authorList>
            <person name="Antelmann H."/>
            <person name="Bernhardt J."/>
            <person name="Schmid R."/>
            <person name="Mach H."/>
            <person name="Voelker U."/>
            <person name="Hecker M."/>
        </authorList>
    </citation>
    <scope>PROTEIN SEQUENCE OF 1-15</scope>
    <source>
        <strain>168 / IS58</strain>
    </source>
</reference>
<reference key="4">
    <citation type="journal article" date="2000" name="J. Biol. Chem.">
        <title>The enoyl-[acyl-carrier-protein] reductases FabI and FabL from Bacillus subtilis.</title>
        <authorList>
            <person name="Heath R.J."/>
            <person name="Su N."/>
            <person name="Murphy C.K."/>
            <person name="Rock C.O."/>
        </authorList>
    </citation>
    <scope>FUNCTION AS AN ENOYL-ACP REDUCTASE AND IN FATTY ACID BIOSYNTHESIS</scope>
    <scope>CATALYTIC ACTIVITY</scope>
    <scope>BIOPHYSICOCHEMICAL PROPERTIES</scope>
    <scope>ACTIVITY REGULATION</scope>
</reference>
<reference key="5">
    <citation type="journal article" date="2011" name="J. Mol. Biol.">
        <title>Crystal structures of Enoyl-ACP reductases I (FabI) and III (FabL) from B. subtilis.</title>
        <authorList>
            <person name="Kim K.H."/>
            <person name="Ha B.H."/>
            <person name="Kim S.J."/>
            <person name="Hong S.K."/>
            <person name="Hwang K.Y."/>
            <person name="Kim E.E."/>
        </authorList>
    </citation>
    <scope>X-RAY CRYSTALLOGRAPHY (1.3 ANGSTROMS) IN COMPLEX WITH NAD AND INHIBITOR</scope>
    <scope>ACTIVITY REGULATION</scope>
    <scope>SUBUNIT</scope>
</reference>
<protein>
    <recommendedName>
        <fullName>Enoyl-[acyl-carrier-protein] reductase [NADH] FabI</fullName>
        <shortName>ENR</shortName>
        <ecNumber>1.3.1.9</ecNumber>
    </recommendedName>
    <alternativeName>
        <fullName>Cold shock-induced protein 15</fullName>
        <shortName>CSI15</shortName>
    </alternativeName>
    <alternativeName>
        <fullName>NADH-dependent enoyl-ACP reductase</fullName>
    </alternativeName>
    <alternativeName>
        <fullName>Vegetative protein 241</fullName>
        <shortName>VEG241</shortName>
    </alternativeName>
</protein>
<feature type="chain" id="PRO_0000054895" description="Enoyl-[acyl-carrier-protein] reductase [NADH] FabI">
    <location>
        <begin position="1"/>
        <end position="258"/>
    </location>
</feature>
<feature type="active site" description="Proton acceptor" evidence="1">
    <location>
        <position position="148"/>
    </location>
</feature>
<feature type="active site" description="Proton acceptor">
    <location>
        <position position="158"/>
    </location>
</feature>
<feature type="binding site" evidence="3">
    <location>
        <position position="14"/>
    </location>
    <ligand>
        <name>NAD(+)</name>
        <dbReference type="ChEBI" id="CHEBI:57540"/>
    </ligand>
</feature>
<feature type="binding site" evidence="3">
    <location>
        <begin position="20"/>
        <end position="21"/>
    </location>
    <ligand>
        <name>NAD(+)</name>
        <dbReference type="ChEBI" id="CHEBI:57540"/>
    </ligand>
</feature>
<feature type="binding site" evidence="3">
    <location>
        <begin position="67"/>
        <end position="68"/>
    </location>
    <ligand>
        <name>NAD(+)</name>
        <dbReference type="ChEBI" id="CHEBI:57540"/>
    </ligand>
</feature>
<feature type="binding site" evidence="3">
    <location>
        <position position="95"/>
    </location>
    <ligand>
        <name>NAD(+)</name>
        <dbReference type="ChEBI" id="CHEBI:57540"/>
    </ligand>
</feature>
<feature type="binding site" evidence="1">
    <location>
        <position position="98"/>
    </location>
    <ligand>
        <name>substrate</name>
    </ligand>
</feature>
<feature type="binding site" evidence="3">
    <location>
        <position position="165"/>
    </location>
    <ligand>
        <name>NAD(+)</name>
        <dbReference type="ChEBI" id="CHEBI:57540"/>
    </ligand>
</feature>
<feature type="binding site" evidence="3">
    <location>
        <begin position="194"/>
        <end position="198"/>
    </location>
    <ligand>
        <name>NAD(+)</name>
        <dbReference type="ChEBI" id="CHEBI:57540"/>
    </ligand>
</feature>
<feature type="site" description="Involved in acyl-ACP binding" evidence="1">
    <location>
        <position position="206"/>
    </location>
</feature>
<feature type="sequence conflict" description="In Ref. 2; AA sequence." evidence="5" ref="2">
    <original>S</original>
    <variation>Q</variation>
    <location>
        <position position="20"/>
    </location>
</feature>
<feature type="strand" evidence="7">
    <location>
        <begin position="9"/>
        <end position="13"/>
    </location>
</feature>
<feature type="helix" evidence="7">
    <location>
        <begin position="21"/>
        <end position="31"/>
    </location>
</feature>
<feature type="strand" evidence="7">
    <location>
        <begin position="35"/>
        <end position="42"/>
    </location>
</feature>
<feature type="helix" evidence="7">
    <location>
        <begin position="43"/>
        <end position="45"/>
    </location>
</feature>
<feature type="helix" evidence="7">
    <location>
        <begin position="46"/>
        <end position="54"/>
    </location>
</feature>
<feature type="strand" evidence="7">
    <location>
        <begin position="56"/>
        <end position="58"/>
    </location>
</feature>
<feature type="strand" evidence="7">
    <location>
        <begin position="62"/>
        <end position="65"/>
    </location>
</feature>
<feature type="strand" evidence="7">
    <location>
        <begin position="69"/>
        <end position="71"/>
    </location>
</feature>
<feature type="helix" evidence="7">
    <location>
        <begin position="72"/>
        <end position="85"/>
    </location>
</feature>
<feature type="strand" evidence="7">
    <location>
        <begin position="90"/>
        <end position="93"/>
    </location>
</feature>
<feature type="helix" evidence="7">
    <location>
        <begin position="100"/>
        <end position="103"/>
    </location>
</feature>
<feature type="helix" evidence="7">
    <location>
        <begin position="107"/>
        <end position="109"/>
    </location>
</feature>
<feature type="helix" evidence="7">
    <location>
        <begin position="112"/>
        <end position="122"/>
    </location>
</feature>
<feature type="helix" evidence="7">
    <location>
        <begin position="124"/>
        <end position="133"/>
    </location>
</feature>
<feature type="helix" evidence="7">
    <location>
        <begin position="134"/>
        <end position="136"/>
    </location>
</feature>
<feature type="strand" evidence="7">
    <location>
        <begin position="141"/>
        <end position="147"/>
    </location>
</feature>
<feature type="helix" evidence="7">
    <location>
        <begin position="149"/>
        <end position="151"/>
    </location>
</feature>
<feature type="turn" evidence="7">
    <location>
        <begin position="156"/>
        <end position="158"/>
    </location>
</feature>
<feature type="helix" evidence="7">
    <location>
        <begin position="159"/>
        <end position="179"/>
    </location>
</feature>
<feature type="helix" evidence="7">
    <location>
        <begin position="180"/>
        <end position="182"/>
    </location>
</feature>
<feature type="strand" evidence="7">
    <location>
        <begin position="184"/>
        <end position="191"/>
    </location>
</feature>
<feature type="helix" evidence="7">
    <location>
        <begin position="197"/>
        <end position="199"/>
    </location>
</feature>
<feature type="strand" evidence="6">
    <location>
        <begin position="202"/>
        <end position="204"/>
    </location>
</feature>
<feature type="helix" evidence="7">
    <location>
        <begin position="205"/>
        <end position="215"/>
    </location>
</feature>
<feature type="helix" evidence="7">
    <location>
        <begin position="224"/>
        <end position="235"/>
    </location>
</feature>
<feature type="helix" evidence="7">
    <location>
        <begin position="237"/>
        <end position="239"/>
    </location>
</feature>
<feature type="strand" evidence="7">
    <location>
        <begin position="246"/>
        <end position="250"/>
    </location>
</feature>
<feature type="helix" evidence="7">
    <location>
        <begin position="253"/>
        <end position="255"/>
    </location>
</feature>
<comment type="function">
    <text evidence="2">Catalyzes the reduction of a carbon-carbon double bond in an enoyl moiety that is covalently linked to an acyl carrier protein (ACP). Involved in the elongation cycle of fatty acid which are used in the lipid metabolism.</text>
</comment>
<comment type="catalytic activity">
    <reaction evidence="2">
        <text>a 2,3-saturated acyl-[ACP] + NAD(+) = a (2E)-enoyl-[ACP] + NADH + H(+)</text>
        <dbReference type="Rhea" id="RHEA:10240"/>
        <dbReference type="Rhea" id="RHEA-COMP:9925"/>
        <dbReference type="Rhea" id="RHEA-COMP:9926"/>
        <dbReference type="ChEBI" id="CHEBI:15378"/>
        <dbReference type="ChEBI" id="CHEBI:57540"/>
        <dbReference type="ChEBI" id="CHEBI:57945"/>
        <dbReference type="ChEBI" id="CHEBI:78784"/>
        <dbReference type="ChEBI" id="CHEBI:78785"/>
        <dbReference type="EC" id="1.3.1.9"/>
    </reaction>
    <physiologicalReaction direction="right-to-left" evidence="2">
        <dbReference type="Rhea" id="RHEA:10242"/>
    </physiologicalReaction>
</comment>
<comment type="catalytic activity">
    <reaction evidence="2">
        <text>(2E)-butenoyl-[ACP] + NADH + H(+) = butanoyl-[ACP] + NAD(+)</text>
        <dbReference type="Rhea" id="RHEA:54868"/>
        <dbReference type="Rhea" id="RHEA-COMP:9627"/>
        <dbReference type="Rhea" id="RHEA-COMP:9628"/>
        <dbReference type="ChEBI" id="CHEBI:15378"/>
        <dbReference type="ChEBI" id="CHEBI:57540"/>
        <dbReference type="ChEBI" id="CHEBI:57945"/>
        <dbReference type="ChEBI" id="CHEBI:78453"/>
        <dbReference type="ChEBI" id="CHEBI:78454"/>
    </reaction>
    <physiologicalReaction direction="left-to-right" evidence="2">
        <dbReference type="Rhea" id="RHEA:54869"/>
    </physiologicalReaction>
</comment>
<comment type="activity regulation">
    <text evidence="2 3">Inhibited by triclosan and acrylamide.</text>
</comment>
<comment type="biophysicochemical properties">
    <kinetics>
        <KM evidence="2">7 uM for NADH</KM>
    </kinetics>
</comment>
<comment type="pathway">
    <text>Lipid metabolism; fatty acid biosynthesis.</text>
</comment>
<comment type="subunit">
    <text evidence="3">Homotetramer.</text>
</comment>
<comment type="induction">
    <text evidence="4">By cold shock.</text>
</comment>
<comment type="similarity">
    <text evidence="5">Belongs to the short-chain dehydrogenases/reductases (SDR) family. FabI subfamily.</text>
</comment>
<sequence length="258" mass="27874">MNFSLEGRNIVVMGVANKRSIAWGIARSLHEAGARLIFTYAGERLEKSVHELAGTLDRNDSIILPCDVTNDAEIETCFASIKEQVGVIHGIAHCIAFANKEELVGEYLNTNRDGFLLAHNISSYSLTAVVKAARPMMTEGGSIVTLTYLGGELVMPNYNVMGVAKASLDASVKYLAADLGKENIRVNSISAGPIRTLSAKGISDFNSILKDIEERAPLRRTTTPEEVGDTAAFLFSDMSRGITGENLHVDSGFHITAR</sequence>
<keyword id="KW-0002">3D-structure</keyword>
<keyword id="KW-0903">Direct protein sequencing</keyword>
<keyword id="KW-0275">Fatty acid biosynthesis</keyword>
<keyword id="KW-0276">Fatty acid metabolism</keyword>
<keyword id="KW-0444">Lipid biosynthesis</keyword>
<keyword id="KW-0443">Lipid metabolism</keyword>
<keyword id="KW-0520">NAD</keyword>
<keyword id="KW-0521">NADP</keyword>
<keyword id="KW-0560">Oxidoreductase</keyword>
<keyword id="KW-1185">Reference proteome</keyword>
<keyword id="KW-0346">Stress response</keyword>
<organism>
    <name type="scientific">Bacillus subtilis (strain 168)</name>
    <dbReference type="NCBI Taxonomy" id="224308"/>
    <lineage>
        <taxon>Bacteria</taxon>
        <taxon>Bacillati</taxon>
        <taxon>Bacillota</taxon>
        <taxon>Bacilli</taxon>
        <taxon>Bacillales</taxon>
        <taxon>Bacillaceae</taxon>
        <taxon>Bacillus</taxon>
    </lineage>
</organism>
<accession>P54616</accession>
<accession>O31621</accession>